<name>MTND1_SORBI</name>
<dbReference type="EC" id="1.13.11.54" evidence="1"/>
<dbReference type="EC" id="1.13.11.53" evidence="1"/>
<dbReference type="EMBL" id="CM000760">
    <property type="protein sequence ID" value="EER94214.1"/>
    <property type="status" value="ALT_SEQ"/>
    <property type="molecule type" value="Genomic_DNA"/>
</dbReference>
<dbReference type="SMR" id="C5X1F5"/>
<dbReference type="STRING" id="4558.C5X1F5"/>
<dbReference type="eggNOG" id="KOG2107">
    <property type="taxonomic scope" value="Eukaryota"/>
</dbReference>
<dbReference type="HOGENOM" id="CLU_768164_0_0_1"/>
<dbReference type="InParanoid" id="C5X1F5"/>
<dbReference type="UniPathway" id="UPA00904">
    <property type="reaction ID" value="UER00878"/>
</dbReference>
<dbReference type="Proteomes" id="UP000000768">
    <property type="component" value="Chromosome 1"/>
</dbReference>
<dbReference type="ExpressionAtlas" id="C5X1F5">
    <property type="expression patterns" value="baseline"/>
</dbReference>
<dbReference type="GO" id="GO:0005737">
    <property type="term" value="C:cytoplasm"/>
    <property type="evidence" value="ECO:0007669"/>
    <property type="project" value="UniProtKB-SubCell"/>
</dbReference>
<dbReference type="GO" id="GO:0005634">
    <property type="term" value="C:nucleus"/>
    <property type="evidence" value="ECO:0007669"/>
    <property type="project" value="UniProtKB-SubCell"/>
</dbReference>
<dbReference type="GO" id="GO:0010308">
    <property type="term" value="F:acireductone dioxygenase (Ni2+-requiring) activity"/>
    <property type="evidence" value="ECO:0007669"/>
    <property type="project" value="UniProtKB-UniRule"/>
</dbReference>
<dbReference type="GO" id="GO:0010309">
    <property type="term" value="F:acireductone dioxygenase [iron(II)-requiring] activity"/>
    <property type="evidence" value="ECO:0000318"/>
    <property type="project" value="GO_Central"/>
</dbReference>
<dbReference type="GO" id="GO:0005506">
    <property type="term" value="F:iron ion binding"/>
    <property type="evidence" value="ECO:0007669"/>
    <property type="project" value="UniProtKB-UniRule"/>
</dbReference>
<dbReference type="GO" id="GO:0016151">
    <property type="term" value="F:nickel cation binding"/>
    <property type="evidence" value="ECO:0007669"/>
    <property type="project" value="UniProtKB-UniRule"/>
</dbReference>
<dbReference type="GO" id="GO:0019509">
    <property type="term" value="P:L-methionine salvage from methylthioadenosine"/>
    <property type="evidence" value="ECO:0007669"/>
    <property type="project" value="UniProtKB-UniRule"/>
</dbReference>
<dbReference type="GO" id="GO:0006555">
    <property type="term" value="P:methionine metabolic process"/>
    <property type="evidence" value="ECO:0000318"/>
    <property type="project" value="GO_Central"/>
</dbReference>
<dbReference type="CDD" id="cd02232">
    <property type="entry name" value="cupin_ARD"/>
    <property type="match status" value="1"/>
</dbReference>
<dbReference type="FunFam" id="2.60.120.10:FF:000031">
    <property type="entry name" value="1,2-dihydroxy-3-keto-5-methylthiopentene dioxygenase"/>
    <property type="match status" value="1"/>
</dbReference>
<dbReference type="Gene3D" id="2.60.120.10">
    <property type="entry name" value="Jelly Rolls"/>
    <property type="match status" value="1"/>
</dbReference>
<dbReference type="HAMAP" id="MF_03154">
    <property type="entry name" value="Salvage_MtnD_euk"/>
    <property type="match status" value="1"/>
</dbReference>
<dbReference type="InterPro" id="IPR004313">
    <property type="entry name" value="ARD"/>
</dbReference>
<dbReference type="InterPro" id="IPR027496">
    <property type="entry name" value="ARD_euk"/>
</dbReference>
<dbReference type="InterPro" id="IPR014710">
    <property type="entry name" value="RmlC-like_jellyroll"/>
</dbReference>
<dbReference type="InterPro" id="IPR011051">
    <property type="entry name" value="RmlC_Cupin_sf"/>
</dbReference>
<dbReference type="PANTHER" id="PTHR23418">
    <property type="entry name" value="ACIREDUCTONE DIOXYGENASE"/>
    <property type="match status" value="1"/>
</dbReference>
<dbReference type="PANTHER" id="PTHR23418:SF0">
    <property type="entry name" value="ACIREDUCTONE DIOXYGENASE"/>
    <property type="match status" value="1"/>
</dbReference>
<dbReference type="Pfam" id="PF03079">
    <property type="entry name" value="ARD"/>
    <property type="match status" value="1"/>
</dbReference>
<dbReference type="SUPFAM" id="SSF51182">
    <property type="entry name" value="RmlC-like cupins"/>
    <property type="match status" value="1"/>
</dbReference>
<evidence type="ECO:0000255" key="1">
    <source>
        <dbReference type="HAMAP-Rule" id="MF_03154"/>
    </source>
</evidence>
<evidence type="ECO:0000305" key="2"/>
<sequence length="180" mass="21449">MDDSEEDQRLPHHRDPKEFIPLDKLSELGIISWRLNPDNWENDENLKKIREARGYSYMDICDVCPEKLPNYEIKIKNFFEEHLHTDEEIRYCLEGSGYFDVRDENDQWIRVAVKKGGMIVLPAGMYHRFTLDNENYIKAMRLFVGEPVWTPYNRPHDHLPARKEYLDKLLKPEGQAVEAR</sequence>
<organism>
    <name type="scientific">Sorghum bicolor</name>
    <name type="common">Sorghum</name>
    <name type="synonym">Sorghum vulgare</name>
    <dbReference type="NCBI Taxonomy" id="4558"/>
    <lineage>
        <taxon>Eukaryota</taxon>
        <taxon>Viridiplantae</taxon>
        <taxon>Streptophyta</taxon>
        <taxon>Embryophyta</taxon>
        <taxon>Tracheophyta</taxon>
        <taxon>Spermatophyta</taxon>
        <taxon>Magnoliopsida</taxon>
        <taxon>Liliopsida</taxon>
        <taxon>Poales</taxon>
        <taxon>Poaceae</taxon>
        <taxon>PACMAD clade</taxon>
        <taxon>Panicoideae</taxon>
        <taxon>Andropogonodae</taxon>
        <taxon>Andropogoneae</taxon>
        <taxon>Sorghinae</taxon>
        <taxon>Sorghum</taxon>
    </lineage>
</organism>
<reference key="1">
    <citation type="journal article" date="2009" name="Nature">
        <title>The Sorghum bicolor genome and the diversification of grasses.</title>
        <authorList>
            <person name="Paterson A.H."/>
            <person name="Bowers J.E."/>
            <person name="Bruggmann R."/>
            <person name="Dubchak I."/>
            <person name="Grimwood J."/>
            <person name="Gundlach H."/>
            <person name="Haberer G."/>
            <person name="Hellsten U."/>
            <person name="Mitros T."/>
            <person name="Poliakov A."/>
            <person name="Schmutz J."/>
            <person name="Spannagl M."/>
            <person name="Tang H."/>
            <person name="Wang X."/>
            <person name="Wicker T."/>
            <person name="Bharti A.K."/>
            <person name="Chapman J."/>
            <person name="Feltus F.A."/>
            <person name="Gowik U."/>
            <person name="Grigoriev I.V."/>
            <person name="Lyons E."/>
            <person name="Maher C.A."/>
            <person name="Martis M."/>
            <person name="Narechania A."/>
            <person name="Otillar R.P."/>
            <person name="Penning B.W."/>
            <person name="Salamov A.A."/>
            <person name="Wang Y."/>
            <person name="Zhang L."/>
            <person name="Carpita N.C."/>
            <person name="Freeling M."/>
            <person name="Gingle A.R."/>
            <person name="Hash C.T."/>
            <person name="Keller B."/>
            <person name="Klein P."/>
            <person name="Kresovich S."/>
            <person name="McCann M.C."/>
            <person name="Ming R."/>
            <person name="Peterson D.G."/>
            <person name="Mehboob-ur-Rahman M."/>
            <person name="Ware D."/>
            <person name="Westhoff P."/>
            <person name="Mayer K.F.X."/>
            <person name="Messing J."/>
            <person name="Rokhsar D.S."/>
        </authorList>
    </citation>
    <scope>NUCLEOTIDE SEQUENCE [LARGE SCALE GENOMIC DNA]</scope>
    <source>
        <strain>cv. BTx623</strain>
    </source>
</reference>
<reference key="2">
    <citation type="journal article" date="2018" name="Plant J.">
        <title>The Sorghum bicolor reference genome: improved assembly, gene annotations, a transcriptome atlas, and signatures of genome organization.</title>
        <authorList>
            <person name="McCormick R.F."/>
            <person name="Truong S.K."/>
            <person name="Sreedasyam A."/>
            <person name="Jenkins J."/>
            <person name="Shu S."/>
            <person name="Sims D."/>
            <person name="Kennedy M."/>
            <person name="Amirebrahimi M."/>
            <person name="Weers B.D."/>
            <person name="McKinley B."/>
            <person name="Mattison A."/>
            <person name="Morishige D.T."/>
            <person name="Grimwood J."/>
            <person name="Schmutz J."/>
            <person name="Mullet J.E."/>
        </authorList>
    </citation>
    <scope>GENOME REANNOTATION</scope>
    <source>
        <strain>cv. BTx623</strain>
    </source>
</reference>
<keyword id="KW-0028">Amino-acid biosynthesis</keyword>
<keyword id="KW-0963">Cytoplasm</keyword>
<keyword id="KW-0223">Dioxygenase</keyword>
<keyword id="KW-0408">Iron</keyword>
<keyword id="KW-0479">Metal-binding</keyword>
<keyword id="KW-0486">Methionine biosynthesis</keyword>
<keyword id="KW-0533">Nickel</keyword>
<keyword id="KW-0539">Nucleus</keyword>
<keyword id="KW-0560">Oxidoreductase</keyword>
<keyword id="KW-1185">Reference proteome</keyword>
<comment type="function">
    <text evidence="1">Catalyzes 2 different reactions between oxygen and the acireductone 1,2-dihydroxy-3-keto-5-methylthiopentene (DHK-MTPene) depending upon the metal bound in the active site. Fe-containing acireductone dioxygenase (Fe-ARD) produces formate and 2-keto-4-methylthiobutyrate (KMTB), the alpha-ketoacid precursor of methionine in the methionine recycle pathway. Ni-containing acireductone dioxygenase (Ni-ARD) produces methylthiopropionate, carbon monoxide and formate, and does not lie on the methionine recycle pathway.</text>
</comment>
<comment type="catalytic activity">
    <reaction evidence="1">
        <text>1,2-dihydroxy-5-(methylsulfanyl)pent-1-en-3-one + O2 = 4-methylsulfanyl-2-oxobutanoate + formate + 2 H(+)</text>
        <dbReference type="Rhea" id="RHEA:24504"/>
        <dbReference type="ChEBI" id="CHEBI:15378"/>
        <dbReference type="ChEBI" id="CHEBI:15379"/>
        <dbReference type="ChEBI" id="CHEBI:15740"/>
        <dbReference type="ChEBI" id="CHEBI:16723"/>
        <dbReference type="ChEBI" id="CHEBI:49252"/>
        <dbReference type="EC" id="1.13.11.54"/>
    </reaction>
</comment>
<comment type="catalytic activity">
    <reaction evidence="1">
        <text>1,2-dihydroxy-5-(methylsulfanyl)pent-1-en-3-one + O2 = 3-(methylsulfanyl)propanoate + CO + formate + 2 H(+)</text>
        <dbReference type="Rhea" id="RHEA:14161"/>
        <dbReference type="ChEBI" id="CHEBI:15378"/>
        <dbReference type="ChEBI" id="CHEBI:15379"/>
        <dbReference type="ChEBI" id="CHEBI:15740"/>
        <dbReference type="ChEBI" id="CHEBI:17245"/>
        <dbReference type="ChEBI" id="CHEBI:49016"/>
        <dbReference type="ChEBI" id="CHEBI:49252"/>
        <dbReference type="EC" id="1.13.11.53"/>
    </reaction>
</comment>
<comment type="cofactor">
    <cofactor evidence="1">
        <name>Fe(2+)</name>
        <dbReference type="ChEBI" id="CHEBI:29033"/>
    </cofactor>
    <cofactor evidence="1">
        <name>Ni(2+)</name>
        <dbReference type="ChEBI" id="CHEBI:49786"/>
    </cofactor>
    <text evidence="1">Binds either 1 Fe or Ni cation per monomer. Iron-binding promotes an acireductone dioxygenase reaction producing 2-keto-4-methylthiobutyrate, while nickel-binding promotes an acireductone dioxygenase reaction producing 3-(methylsulfanyl)propanoate.</text>
</comment>
<comment type="pathway">
    <text evidence="1">Amino-acid biosynthesis; L-methionine biosynthesis via salvage pathway; L-methionine from S-methyl-5-thio-alpha-D-ribose 1-phosphate: step 5/6.</text>
</comment>
<comment type="subcellular location">
    <subcellularLocation>
        <location evidence="1">Cytoplasm</location>
    </subcellularLocation>
    <subcellularLocation>
        <location evidence="1">Nucleus</location>
    </subcellularLocation>
</comment>
<comment type="similarity">
    <text evidence="1">Belongs to the acireductone dioxygenase (ARD) family.</text>
</comment>
<comment type="sequence caution" evidence="2">
    <conflict type="erroneous gene model prediction">
        <sequence resource="EMBL-CDS" id="EER94214"/>
    </conflict>
</comment>
<gene>
    <name type="ordered locus">Sb01g021500</name>
</gene>
<protein>
    <recommendedName>
        <fullName evidence="1">Acireductone dioxygenase 1</fullName>
    </recommendedName>
    <alternativeName>
        <fullName evidence="1">Acireductone dioxygenase (Fe(2+)-requiring) 1</fullName>
        <shortName evidence="1">ARD' 1</shortName>
        <shortName evidence="1">Fe-ARD 1</shortName>
        <ecNumber evidence="1">1.13.11.54</ecNumber>
    </alternativeName>
    <alternativeName>
        <fullName evidence="1">Acireductone dioxygenase (Ni(2+)-requiring) 1</fullName>
        <shortName evidence="1">ARD 1</shortName>
        <shortName evidence="1">Ni-ARD 1</shortName>
        <ecNumber evidence="1">1.13.11.53</ecNumber>
    </alternativeName>
</protein>
<proteinExistence type="inferred from homology"/>
<feature type="chain" id="PRO_0000414345" description="Acireductone dioxygenase 1">
    <location>
        <begin position="1"/>
        <end position="180"/>
    </location>
</feature>
<feature type="binding site" evidence="1">
    <location>
        <position position="82"/>
    </location>
    <ligand>
        <name>Fe(2+)</name>
        <dbReference type="ChEBI" id="CHEBI:29033"/>
        <note>for iron-dependent acireductone dioxygenase activity</note>
    </ligand>
</feature>
<feature type="binding site" evidence="1">
    <location>
        <position position="82"/>
    </location>
    <ligand>
        <name>Ni(2+)</name>
        <dbReference type="ChEBI" id="CHEBI:49786"/>
        <note>for nickel-dependent acireductone dioxygenase activity</note>
    </ligand>
</feature>
<feature type="binding site" evidence="1">
    <location>
        <position position="84"/>
    </location>
    <ligand>
        <name>Fe(2+)</name>
        <dbReference type="ChEBI" id="CHEBI:29033"/>
        <note>for iron-dependent acireductone dioxygenase activity</note>
    </ligand>
</feature>
<feature type="binding site" evidence="1">
    <location>
        <position position="84"/>
    </location>
    <ligand>
        <name>Ni(2+)</name>
        <dbReference type="ChEBI" id="CHEBI:49786"/>
        <note>for nickel-dependent acireductone dioxygenase activity</note>
    </ligand>
</feature>
<feature type="binding site" evidence="1">
    <location>
        <position position="88"/>
    </location>
    <ligand>
        <name>Fe(2+)</name>
        <dbReference type="ChEBI" id="CHEBI:29033"/>
        <note>for iron-dependent acireductone dioxygenase activity</note>
    </ligand>
</feature>
<feature type="binding site" evidence="1">
    <location>
        <position position="88"/>
    </location>
    <ligand>
        <name>Ni(2+)</name>
        <dbReference type="ChEBI" id="CHEBI:49786"/>
        <note>for nickel-dependent acireductone dioxygenase activity</note>
    </ligand>
</feature>
<feature type="binding site" evidence="1">
    <location>
        <position position="127"/>
    </location>
    <ligand>
        <name>Fe(2+)</name>
        <dbReference type="ChEBI" id="CHEBI:29033"/>
        <note>for iron-dependent acireductone dioxygenase activity</note>
    </ligand>
</feature>
<feature type="binding site" evidence="1">
    <location>
        <position position="127"/>
    </location>
    <ligand>
        <name>Ni(2+)</name>
        <dbReference type="ChEBI" id="CHEBI:49786"/>
        <note>for nickel-dependent acireductone dioxygenase activity</note>
    </ligand>
</feature>
<accession>C5X1F5</accession>